<dbReference type="EMBL" id="CP000159">
    <property type="protein sequence ID" value="ABC45397.1"/>
    <property type="molecule type" value="Genomic_DNA"/>
</dbReference>
<dbReference type="RefSeq" id="WP_011403798.1">
    <property type="nucleotide sequence ID" value="NC_007677.1"/>
</dbReference>
<dbReference type="RefSeq" id="YP_445170.1">
    <property type="nucleotide sequence ID" value="NC_007677.1"/>
</dbReference>
<dbReference type="SMR" id="Q2S3R1"/>
<dbReference type="STRING" id="309807.SRU_1038"/>
<dbReference type="EnsemblBacteria" id="ABC45397">
    <property type="protein sequence ID" value="ABC45397"/>
    <property type="gene ID" value="SRU_1038"/>
</dbReference>
<dbReference type="GeneID" id="83727967"/>
<dbReference type="KEGG" id="sru:SRU_1038"/>
<dbReference type="PATRIC" id="fig|309807.25.peg.1076"/>
<dbReference type="eggNOG" id="COG0090">
    <property type="taxonomic scope" value="Bacteria"/>
</dbReference>
<dbReference type="HOGENOM" id="CLU_036235_2_1_10"/>
<dbReference type="OrthoDB" id="9778722at2"/>
<dbReference type="Proteomes" id="UP000008674">
    <property type="component" value="Chromosome"/>
</dbReference>
<dbReference type="GO" id="GO:0015934">
    <property type="term" value="C:large ribosomal subunit"/>
    <property type="evidence" value="ECO:0007669"/>
    <property type="project" value="InterPro"/>
</dbReference>
<dbReference type="GO" id="GO:0019843">
    <property type="term" value="F:rRNA binding"/>
    <property type="evidence" value="ECO:0007669"/>
    <property type="project" value="UniProtKB-UniRule"/>
</dbReference>
<dbReference type="GO" id="GO:0003735">
    <property type="term" value="F:structural constituent of ribosome"/>
    <property type="evidence" value="ECO:0007669"/>
    <property type="project" value="InterPro"/>
</dbReference>
<dbReference type="GO" id="GO:0016740">
    <property type="term" value="F:transferase activity"/>
    <property type="evidence" value="ECO:0007669"/>
    <property type="project" value="InterPro"/>
</dbReference>
<dbReference type="GO" id="GO:0002181">
    <property type="term" value="P:cytoplasmic translation"/>
    <property type="evidence" value="ECO:0007669"/>
    <property type="project" value="TreeGrafter"/>
</dbReference>
<dbReference type="FunFam" id="2.30.30.30:FF:000001">
    <property type="entry name" value="50S ribosomal protein L2"/>
    <property type="match status" value="1"/>
</dbReference>
<dbReference type="FunFam" id="2.40.50.140:FF:000003">
    <property type="entry name" value="50S ribosomal protein L2"/>
    <property type="match status" value="1"/>
</dbReference>
<dbReference type="FunFam" id="4.10.950.10:FF:000001">
    <property type="entry name" value="50S ribosomal protein L2"/>
    <property type="match status" value="1"/>
</dbReference>
<dbReference type="Gene3D" id="2.30.30.30">
    <property type="match status" value="1"/>
</dbReference>
<dbReference type="Gene3D" id="2.40.50.140">
    <property type="entry name" value="Nucleic acid-binding proteins"/>
    <property type="match status" value="1"/>
</dbReference>
<dbReference type="Gene3D" id="4.10.950.10">
    <property type="entry name" value="Ribosomal protein L2, domain 3"/>
    <property type="match status" value="1"/>
</dbReference>
<dbReference type="HAMAP" id="MF_01320_B">
    <property type="entry name" value="Ribosomal_uL2_B"/>
    <property type="match status" value="1"/>
</dbReference>
<dbReference type="InterPro" id="IPR012340">
    <property type="entry name" value="NA-bd_OB-fold"/>
</dbReference>
<dbReference type="InterPro" id="IPR014722">
    <property type="entry name" value="Rib_uL2_dom2"/>
</dbReference>
<dbReference type="InterPro" id="IPR002171">
    <property type="entry name" value="Ribosomal_uL2"/>
</dbReference>
<dbReference type="InterPro" id="IPR005880">
    <property type="entry name" value="Ribosomal_uL2_bac/org-type"/>
</dbReference>
<dbReference type="InterPro" id="IPR022669">
    <property type="entry name" value="Ribosomal_uL2_C"/>
</dbReference>
<dbReference type="InterPro" id="IPR022671">
    <property type="entry name" value="Ribosomal_uL2_CS"/>
</dbReference>
<dbReference type="InterPro" id="IPR014726">
    <property type="entry name" value="Ribosomal_uL2_dom3"/>
</dbReference>
<dbReference type="InterPro" id="IPR022666">
    <property type="entry name" value="Ribosomal_uL2_RNA-bd_dom"/>
</dbReference>
<dbReference type="InterPro" id="IPR008991">
    <property type="entry name" value="Translation_prot_SH3-like_sf"/>
</dbReference>
<dbReference type="NCBIfam" id="TIGR01171">
    <property type="entry name" value="rplB_bact"/>
    <property type="match status" value="1"/>
</dbReference>
<dbReference type="PANTHER" id="PTHR13691:SF5">
    <property type="entry name" value="LARGE RIBOSOMAL SUBUNIT PROTEIN UL2M"/>
    <property type="match status" value="1"/>
</dbReference>
<dbReference type="PANTHER" id="PTHR13691">
    <property type="entry name" value="RIBOSOMAL PROTEIN L2"/>
    <property type="match status" value="1"/>
</dbReference>
<dbReference type="Pfam" id="PF00181">
    <property type="entry name" value="Ribosomal_L2"/>
    <property type="match status" value="1"/>
</dbReference>
<dbReference type="Pfam" id="PF03947">
    <property type="entry name" value="Ribosomal_L2_C"/>
    <property type="match status" value="1"/>
</dbReference>
<dbReference type="PIRSF" id="PIRSF002158">
    <property type="entry name" value="Ribosomal_L2"/>
    <property type="match status" value="1"/>
</dbReference>
<dbReference type="SMART" id="SM01383">
    <property type="entry name" value="Ribosomal_L2"/>
    <property type="match status" value="1"/>
</dbReference>
<dbReference type="SMART" id="SM01382">
    <property type="entry name" value="Ribosomal_L2_C"/>
    <property type="match status" value="1"/>
</dbReference>
<dbReference type="SUPFAM" id="SSF50249">
    <property type="entry name" value="Nucleic acid-binding proteins"/>
    <property type="match status" value="1"/>
</dbReference>
<dbReference type="SUPFAM" id="SSF50104">
    <property type="entry name" value="Translation proteins SH3-like domain"/>
    <property type="match status" value="1"/>
</dbReference>
<dbReference type="PROSITE" id="PS00467">
    <property type="entry name" value="RIBOSOMAL_L2"/>
    <property type="match status" value="1"/>
</dbReference>
<proteinExistence type="inferred from homology"/>
<gene>
    <name evidence="1" type="primary">rplB</name>
    <name type="ordered locus">SRU_1038</name>
</gene>
<comment type="function">
    <text evidence="1">One of the primary rRNA binding proteins. Required for association of the 30S and 50S subunits to form the 70S ribosome, for tRNA binding and peptide bond formation. It has been suggested to have peptidyltransferase activity; this is somewhat controversial. Makes several contacts with the 16S rRNA in the 70S ribosome.</text>
</comment>
<comment type="subunit">
    <text evidence="1">Part of the 50S ribosomal subunit. Forms a bridge to the 30S subunit in the 70S ribosome.</text>
</comment>
<comment type="similarity">
    <text evidence="1">Belongs to the universal ribosomal protein uL2 family.</text>
</comment>
<sequence>MSIKKRKPTINSQRQYSVDDKEDITTTDPERSLLEPLPNSGGRNNQGRMTMRYRGGGHKRRYRKIDFKRRDKDGIPATVKTIEYDPNRSARISLLAYADGEKRYIITPDGLEVGDTVMNGPQAQAEVGNCLPLTSIPLGTKVHCVEMTPEKGAQMVRAAGTHAQLTAREGDYATLELPSGETRLVPSKCRATVGTTSNVEHENVVLGKAGRKRWLGRRPRTRGVAMNPIDHPMGGGEGLKSGGHPRSREGVPAKGYKTRKRNKESNKYIIRRRTESKQGTGGQ</sequence>
<organism>
    <name type="scientific">Salinibacter ruber (strain DSM 13855 / M31)</name>
    <dbReference type="NCBI Taxonomy" id="309807"/>
    <lineage>
        <taxon>Bacteria</taxon>
        <taxon>Pseudomonadati</taxon>
        <taxon>Rhodothermota</taxon>
        <taxon>Rhodothermia</taxon>
        <taxon>Rhodothermales</taxon>
        <taxon>Salinibacteraceae</taxon>
        <taxon>Salinibacter</taxon>
    </lineage>
</organism>
<feature type="chain" id="PRO_0000237237" description="Large ribosomal subunit protein uL2">
    <location>
        <begin position="1"/>
        <end position="283"/>
    </location>
</feature>
<feature type="region of interest" description="Disordered" evidence="2">
    <location>
        <begin position="1"/>
        <end position="59"/>
    </location>
</feature>
<feature type="region of interest" description="Disordered" evidence="2">
    <location>
        <begin position="222"/>
        <end position="283"/>
    </location>
</feature>
<reference key="1">
    <citation type="journal article" date="2005" name="Proc. Natl. Acad. Sci. U.S.A.">
        <title>The genome of Salinibacter ruber: convergence and gene exchange among hyperhalophilic bacteria and archaea.</title>
        <authorList>
            <person name="Mongodin E.F."/>
            <person name="Nelson K.E."/>
            <person name="Daugherty S."/>
            <person name="DeBoy R.T."/>
            <person name="Wister J."/>
            <person name="Khouri H."/>
            <person name="Weidman J."/>
            <person name="Walsh D.A."/>
            <person name="Papke R.T."/>
            <person name="Sanchez Perez G."/>
            <person name="Sharma A.K."/>
            <person name="Nesbo C.L."/>
            <person name="MacLeod D."/>
            <person name="Bapteste E."/>
            <person name="Doolittle W.F."/>
            <person name="Charlebois R.L."/>
            <person name="Legault B."/>
            <person name="Rodriguez-Valera F."/>
        </authorList>
    </citation>
    <scope>NUCLEOTIDE SEQUENCE [LARGE SCALE GENOMIC DNA]</scope>
    <source>
        <strain>DSM 13855 / CECT 5946 / M31</strain>
    </source>
</reference>
<protein>
    <recommendedName>
        <fullName evidence="1">Large ribosomal subunit protein uL2</fullName>
    </recommendedName>
    <alternativeName>
        <fullName evidence="3">50S ribosomal protein L2</fullName>
    </alternativeName>
</protein>
<accession>Q2S3R1</accession>
<name>RL2_SALRD</name>
<keyword id="KW-1185">Reference proteome</keyword>
<keyword id="KW-0687">Ribonucleoprotein</keyword>
<keyword id="KW-0689">Ribosomal protein</keyword>
<keyword id="KW-0694">RNA-binding</keyword>
<keyword id="KW-0699">rRNA-binding</keyword>
<evidence type="ECO:0000255" key="1">
    <source>
        <dbReference type="HAMAP-Rule" id="MF_01320"/>
    </source>
</evidence>
<evidence type="ECO:0000256" key="2">
    <source>
        <dbReference type="SAM" id="MobiDB-lite"/>
    </source>
</evidence>
<evidence type="ECO:0000305" key="3"/>